<gene>
    <name evidence="1" type="primary">dapH</name>
    <name type="ordered locus">MK0435</name>
</gene>
<evidence type="ECO:0000255" key="1">
    <source>
        <dbReference type="HAMAP-Rule" id="MF_01691"/>
    </source>
</evidence>
<accession>Q8TY70</accession>
<organism>
    <name type="scientific">Methanopyrus kandleri (strain AV19 / DSM 6324 / JCM 9639 / NBRC 100938)</name>
    <dbReference type="NCBI Taxonomy" id="190192"/>
    <lineage>
        <taxon>Archaea</taxon>
        <taxon>Methanobacteriati</taxon>
        <taxon>Methanobacteriota</taxon>
        <taxon>Methanomada group</taxon>
        <taxon>Methanopyri</taxon>
        <taxon>Methanopyrales</taxon>
        <taxon>Methanopyraceae</taxon>
        <taxon>Methanopyrus</taxon>
    </lineage>
</organism>
<sequence>MRPLSELDPEELIRYISESPKRTIAKFYVKTDDPEGLAERLEERLEDAKVFTGVDHVIVIGEHDDVVEVLESEDSVEYYHKELDHRNRAVPLADYSEFEDVRIEPGAIIREKVKLGKGVVVMMGAVINIGAKIGDGTMVDMNAVVGSRAEVGKNVHIGAGAVIAGVLEPPSAKPVVIEDDVVIGANAVILEGVRVGKGAVVAAGAVVTEDVPPSKVVAGVPARVVKDVDKKTEAKTQIVDALRCL</sequence>
<reference key="1">
    <citation type="journal article" date="2002" name="Proc. Natl. Acad. Sci. U.S.A.">
        <title>The complete genome of hyperthermophile Methanopyrus kandleri AV19 and monophyly of archaeal methanogens.</title>
        <authorList>
            <person name="Slesarev A.I."/>
            <person name="Mezhevaya K.V."/>
            <person name="Makarova K.S."/>
            <person name="Polushin N.N."/>
            <person name="Shcherbinina O.V."/>
            <person name="Shakhova V.V."/>
            <person name="Belova G.I."/>
            <person name="Aravind L."/>
            <person name="Natale D.A."/>
            <person name="Rogozin I.B."/>
            <person name="Tatusov R.L."/>
            <person name="Wolf Y.I."/>
            <person name="Stetter K.O."/>
            <person name="Malykh A.G."/>
            <person name="Koonin E.V."/>
            <person name="Kozyavkin S.A."/>
        </authorList>
    </citation>
    <scope>NUCLEOTIDE SEQUENCE [LARGE SCALE GENOMIC DNA]</scope>
    <source>
        <strain>AV19 / DSM 6324 / JCM 9639 / NBRC 100938</strain>
    </source>
</reference>
<name>DAPH_METKA</name>
<keyword id="KW-0012">Acyltransferase</keyword>
<keyword id="KW-0028">Amino-acid biosynthesis</keyword>
<keyword id="KW-0220">Diaminopimelate biosynthesis</keyword>
<keyword id="KW-0457">Lysine biosynthesis</keyword>
<keyword id="KW-1185">Reference proteome</keyword>
<keyword id="KW-0677">Repeat</keyword>
<keyword id="KW-0808">Transferase</keyword>
<protein>
    <recommendedName>
        <fullName evidence="1">2,3,4,5-tetrahydropyridine-2,6-dicarboxylate N-acetyltransferase</fullName>
        <ecNumber evidence="1">2.3.1.89</ecNumber>
    </recommendedName>
    <alternativeName>
        <fullName evidence="1">Tetrahydrodipicolinate N-acetyltransferase</fullName>
        <shortName evidence="1">THP acetyltransferase</shortName>
        <shortName evidence="1">Tetrahydropicolinate acetylase</shortName>
    </alternativeName>
</protein>
<comment type="function">
    <text evidence="1">Catalyzes the transfer of an acetyl group from acetyl-CoA to tetrahydrodipicolinate.</text>
</comment>
<comment type="catalytic activity">
    <reaction evidence="1">
        <text>(S)-2,3,4,5-tetrahydrodipicolinate + acetyl-CoA + H2O = L-2-acetamido-6-oxoheptanedioate + CoA</text>
        <dbReference type="Rhea" id="RHEA:13085"/>
        <dbReference type="ChEBI" id="CHEBI:15377"/>
        <dbReference type="ChEBI" id="CHEBI:16845"/>
        <dbReference type="ChEBI" id="CHEBI:57287"/>
        <dbReference type="ChEBI" id="CHEBI:57288"/>
        <dbReference type="ChEBI" id="CHEBI:58117"/>
        <dbReference type="EC" id="2.3.1.89"/>
    </reaction>
</comment>
<comment type="pathway">
    <text evidence="1">Amino-acid biosynthesis; L-lysine biosynthesis via DAP pathway; LL-2,6-diaminopimelate from (S)-tetrahydrodipicolinate (acetylase route): step 1/3.</text>
</comment>
<comment type="similarity">
    <text evidence="1">Belongs to the transferase hexapeptide repeat family. DapH subfamily.</text>
</comment>
<proteinExistence type="inferred from homology"/>
<feature type="chain" id="PRO_0000376733" description="2,3,4,5-tetrahydropyridine-2,6-dicarboxylate N-acetyltransferase">
    <location>
        <begin position="1"/>
        <end position="245"/>
    </location>
</feature>
<dbReference type="EC" id="2.3.1.89" evidence="1"/>
<dbReference type="EMBL" id="AE009439">
    <property type="protein sequence ID" value="AAM01650.1"/>
    <property type="molecule type" value="Genomic_DNA"/>
</dbReference>
<dbReference type="SMR" id="Q8TY70"/>
<dbReference type="STRING" id="190192.MK0435"/>
<dbReference type="PaxDb" id="190192-MK0435"/>
<dbReference type="EnsemblBacteria" id="AAM01650">
    <property type="protein sequence ID" value="AAM01650"/>
    <property type="gene ID" value="MK0435"/>
</dbReference>
<dbReference type="KEGG" id="mka:MK0435"/>
<dbReference type="PATRIC" id="fig|190192.8.peg.464"/>
<dbReference type="HOGENOM" id="CLU_103751_0_0_2"/>
<dbReference type="InParanoid" id="Q8TY70"/>
<dbReference type="UniPathway" id="UPA00034">
    <property type="reaction ID" value="UER00022"/>
</dbReference>
<dbReference type="Proteomes" id="UP000001826">
    <property type="component" value="Chromosome"/>
</dbReference>
<dbReference type="GO" id="GO:0047200">
    <property type="term" value="F:tetrahydrodipicolinate N-acetyltransferase activity"/>
    <property type="evidence" value="ECO:0007669"/>
    <property type="project" value="UniProtKB-EC"/>
</dbReference>
<dbReference type="GO" id="GO:0019877">
    <property type="term" value="P:diaminopimelate biosynthetic process"/>
    <property type="evidence" value="ECO:0007669"/>
    <property type="project" value="UniProtKB-UniRule"/>
</dbReference>
<dbReference type="GO" id="GO:0009089">
    <property type="term" value="P:lysine biosynthetic process via diaminopimelate"/>
    <property type="evidence" value="ECO:0007669"/>
    <property type="project" value="UniProtKB-UniRule"/>
</dbReference>
<dbReference type="CDD" id="cd03350">
    <property type="entry name" value="LbH_THP_succinylT"/>
    <property type="match status" value="1"/>
</dbReference>
<dbReference type="Gene3D" id="2.160.10.10">
    <property type="entry name" value="Hexapeptide repeat proteins"/>
    <property type="match status" value="1"/>
</dbReference>
<dbReference type="Gene3D" id="3.30.70.250">
    <property type="entry name" value="Malonyl-CoA ACP transacylase, ACP-binding"/>
    <property type="match status" value="1"/>
</dbReference>
<dbReference type="HAMAP" id="MF_01691">
    <property type="entry name" value="DapH"/>
    <property type="match status" value="1"/>
</dbReference>
<dbReference type="InterPro" id="IPR019873">
    <property type="entry name" value="DapH"/>
</dbReference>
<dbReference type="InterPro" id="IPR013710">
    <property type="entry name" value="DapH_N"/>
</dbReference>
<dbReference type="InterPro" id="IPR001451">
    <property type="entry name" value="Hexapep"/>
</dbReference>
<dbReference type="InterPro" id="IPR018357">
    <property type="entry name" value="Hexapep_transf_CS"/>
</dbReference>
<dbReference type="InterPro" id="IPR050179">
    <property type="entry name" value="Trans_hexapeptide_repeat"/>
</dbReference>
<dbReference type="InterPro" id="IPR011004">
    <property type="entry name" value="Trimer_LpxA-like_sf"/>
</dbReference>
<dbReference type="NCBIfam" id="TIGR03532">
    <property type="entry name" value="DapD_Ac"/>
    <property type="match status" value="1"/>
</dbReference>
<dbReference type="PANTHER" id="PTHR43300:SF10">
    <property type="entry name" value="2,3,4,5-TETRAHYDROPYRIDINE-2,6-DICARBOXYLATE N-ACETYLTRANSFERASE"/>
    <property type="match status" value="1"/>
</dbReference>
<dbReference type="PANTHER" id="PTHR43300">
    <property type="entry name" value="ACETYLTRANSFERASE"/>
    <property type="match status" value="1"/>
</dbReference>
<dbReference type="Pfam" id="PF08503">
    <property type="entry name" value="DapH_N"/>
    <property type="match status" value="1"/>
</dbReference>
<dbReference type="Pfam" id="PF00132">
    <property type="entry name" value="Hexapep"/>
    <property type="match status" value="1"/>
</dbReference>
<dbReference type="Pfam" id="PF14602">
    <property type="entry name" value="Hexapep_2"/>
    <property type="match status" value="1"/>
</dbReference>
<dbReference type="SUPFAM" id="SSF51161">
    <property type="entry name" value="Trimeric LpxA-like enzymes"/>
    <property type="match status" value="1"/>
</dbReference>
<dbReference type="PROSITE" id="PS00101">
    <property type="entry name" value="HEXAPEP_TRANSFERASES"/>
    <property type="match status" value="2"/>
</dbReference>